<protein>
    <recommendedName>
        <fullName evidence="1">ATP synthase subunit beta</fullName>
        <ecNumber evidence="1">7.1.2.2</ecNumber>
    </recommendedName>
    <alternativeName>
        <fullName evidence="1">ATP synthase F1 sector subunit beta</fullName>
    </alternativeName>
    <alternativeName>
        <fullName evidence="1">F-ATPase subunit beta</fullName>
    </alternativeName>
</protein>
<keyword id="KW-0066">ATP synthesis</keyword>
<keyword id="KW-0067">ATP-binding</keyword>
<keyword id="KW-0997">Cell inner membrane</keyword>
<keyword id="KW-1003">Cell membrane</keyword>
<keyword id="KW-0139">CF(1)</keyword>
<keyword id="KW-0375">Hydrogen ion transport</keyword>
<keyword id="KW-0406">Ion transport</keyword>
<keyword id="KW-0472">Membrane</keyword>
<keyword id="KW-0547">Nucleotide-binding</keyword>
<keyword id="KW-1185">Reference proteome</keyword>
<keyword id="KW-1278">Translocase</keyword>
<keyword id="KW-0813">Transport</keyword>
<accession>P55988</accession>
<accession>O07676</accession>
<name>ATPB_HELPY</name>
<dbReference type="EC" id="7.1.2.2" evidence="1"/>
<dbReference type="EMBL" id="AF004014">
    <property type="protein sequence ID" value="AAB61298.1"/>
    <property type="molecule type" value="Genomic_DNA"/>
</dbReference>
<dbReference type="EMBL" id="AE000511">
    <property type="protein sequence ID" value="AAD08174.1"/>
    <property type="molecule type" value="Genomic_DNA"/>
</dbReference>
<dbReference type="PIR" id="D64661">
    <property type="entry name" value="D64661"/>
</dbReference>
<dbReference type="RefSeq" id="NP_207923.1">
    <property type="nucleotide sequence ID" value="NC_000915.1"/>
</dbReference>
<dbReference type="SMR" id="P55988"/>
<dbReference type="DIP" id="DIP-3361N"/>
<dbReference type="FunCoup" id="P55988">
    <property type="interactions" value="292"/>
</dbReference>
<dbReference type="IntAct" id="P55988">
    <property type="interactions" value="3"/>
</dbReference>
<dbReference type="MINT" id="P55988"/>
<dbReference type="STRING" id="85962.HP_1132"/>
<dbReference type="PaxDb" id="85962-C694_05840"/>
<dbReference type="EnsemblBacteria" id="AAD08174">
    <property type="protein sequence ID" value="AAD08174"/>
    <property type="gene ID" value="HP_1132"/>
</dbReference>
<dbReference type="KEGG" id="hpy:HP_1132"/>
<dbReference type="PATRIC" id="fig|85962.8.peg.1184"/>
<dbReference type="eggNOG" id="COG0055">
    <property type="taxonomic scope" value="Bacteria"/>
</dbReference>
<dbReference type="InParanoid" id="P55988"/>
<dbReference type="OrthoDB" id="9801639at2"/>
<dbReference type="PhylomeDB" id="P55988"/>
<dbReference type="Proteomes" id="UP000000429">
    <property type="component" value="Chromosome"/>
</dbReference>
<dbReference type="GO" id="GO:0005886">
    <property type="term" value="C:plasma membrane"/>
    <property type="evidence" value="ECO:0007669"/>
    <property type="project" value="UniProtKB-SubCell"/>
</dbReference>
<dbReference type="GO" id="GO:0045259">
    <property type="term" value="C:proton-transporting ATP synthase complex"/>
    <property type="evidence" value="ECO:0007669"/>
    <property type="project" value="UniProtKB-KW"/>
</dbReference>
<dbReference type="GO" id="GO:0005524">
    <property type="term" value="F:ATP binding"/>
    <property type="evidence" value="ECO:0007669"/>
    <property type="project" value="UniProtKB-UniRule"/>
</dbReference>
<dbReference type="GO" id="GO:0016887">
    <property type="term" value="F:ATP hydrolysis activity"/>
    <property type="evidence" value="ECO:0007669"/>
    <property type="project" value="InterPro"/>
</dbReference>
<dbReference type="GO" id="GO:0046933">
    <property type="term" value="F:proton-transporting ATP synthase activity, rotational mechanism"/>
    <property type="evidence" value="ECO:0007669"/>
    <property type="project" value="UniProtKB-UniRule"/>
</dbReference>
<dbReference type="CDD" id="cd18110">
    <property type="entry name" value="ATP-synt_F1_beta_C"/>
    <property type="match status" value="1"/>
</dbReference>
<dbReference type="CDD" id="cd18115">
    <property type="entry name" value="ATP-synt_F1_beta_N"/>
    <property type="match status" value="1"/>
</dbReference>
<dbReference type="CDD" id="cd01133">
    <property type="entry name" value="F1-ATPase_beta_CD"/>
    <property type="match status" value="1"/>
</dbReference>
<dbReference type="FunFam" id="1.10.1140.10:FF:000001">
    <property type="entry name" value="ATP synthase subunit beta"/>
    <property type="match status" value="1"/>
</dbReference>
<dbReference type="FunFam" id="3.40.50.300:FF:000004">
    <property type="entry name" value="ATP synthase subunit beta"/>
    <property type="match status" value="1"/>
</dbReference>
<dbReference type="Gene3D" id="2.40.10.170">
    <property type="match status" value="1"/>
</dbReference>
<dbReference type="Gene3D" id="1.10.1140.10">
    <property type="entry name" value="Bovine Mitochondrial F1-atpase, Atp Synthase Beta Chain, Chain D, domain 3"/>
    <property type="match status" value="1"/>
</dbReference>
<dbReference type="Gene3D" id="3.40.50.300">
    <property type="entry name" value="P-loop containing nucleotide triphosphate hydrolases"/>
    <property type="match status" value="1"/>
</dbReference>
<dbReference type="HAMAP" id="MF_01347">
    <property type="entry name" value="ATP_synth_beta_bact"/>
    <property type="match status" value="1"/>
</dbReference>
<dbReference type="InterPro" id="IPR003593">
    <property type="entry name" value="AAA+_ATPase"/>
</dbReference>
<dbReference type="InterPro" id="IPR055190">
    <property type="entry name" value="ATP-synt_VA_C"/>
</dbReference>
<dbReference type="InterPro" id="IPR005722">
    <property type="entry name" value="ATP_synth_F1_bsu"/>
</dbReference>
<dbReference type="InterPro" id="IPR020003">
    <property type="entry name" value="ATPase_a/bsu_AS"/>
</dbReference>
<dbReference type="InterPro" id="IPR050053">
    <property type="entry name" value="ATPase_alpha/beta_chains"/>
</dbReference>
<dbReference type="InterPro" id="IPR004100">
    <property type="entry name" value="ATPase_F1/V1/A1_a/bsu_N"/>
</dbReference>
<dbReference type="InterPro" id="IPR036121">
    <property type="entry name" value="ATPase_F1/V1/A1_a/bsu_N_sf"/>
</dbReference>
<dbReference type="InterPro" id="IPR000194">
    <property type="entry name" value="ATPase_F1/V1/A1_a/bsu_nucl-bd"/>
</dbReference>
<dbReference type="InterPro" id="IPR024034">
    <property type="entry name" value="ATPase_F1/V1_b/a_C"/>
</dbReference>
<dbReference type="InterPro" id="IPR027417">
    <property type="entry name" value="P-loop_NTPase"/>
</dbReference>
<dbReference type="NCBIfam" id="TIGR01039">
    <property type="entry name" value="atpD"/>
    <property type="match status" value="1"/>
</dbReference>
<dbReference type="PANTHER" id="PTHR15184">
    <property type="entry name" value="ATP SYNTHASE"/>
    <property type="match status" value="1"/>
</dbReference>
<dbReference type="PANTHER" id="PTHR15184:SF71">
    <property type="entry name" value="ATP SYNTHASE SUBUNIT BETA, MITOCHONDRIAL"/>
    <property type="match status" value="1"/>
</dbReference>
<dbReference type="Pfam" id="PF00006">
    <property type="entry name" value="ATP-synt_ab"/>
    <property type="match status" value="1"/>
</dbReference>
<dbReference type="Pfam" id="PF02874">
    <property type="entry name" value="ATP-synt_ab_N"/>
    <property type="match status" value="1"/>
</dbReference>
<dbReference type="Pfam" id="PF22919">
    <property type="entry name" value="ATP-synt_VA_C"/>
    <property type="match status" value="1"/>
</dbReference>
<dbReference type="SMART" id="SM00382">
    <property type="entry name" value="AAA"/>
    <property type="match status" value="1"/>
</dbReference>
<dbReference type="SUPFAM" id="SSF47917">
    <property type="entry name" value="C-terminal domain of alpha and beta subunits of F1 ATP synthase"/>
    <property type="match status" value="1"/>
</dbReference>
<dbReference type="SUPFAM" id="SSF50615">
    <property type="entry name" value="N-terminal domain of alpha and beta subunits of F1 ATP synthase"/>
    <property type="match status" value="1"/>
</dbReference>
<dbReference type="SUPFAM" id="SSF52540">
    <property type="entry name" value="P-loop containing nucleoside triphosphate hydrolases"/>
    <property type="match status" value="1"/>
</dbReference>
<dbReference type="PROSITE" id="PS00152">
    <property type="entry name" value="ATPASE_ALPHA_BETA"/>
    <property type="match status" value="1"/>
</dbReference>
<organism>
    <name type="scientific">Helicobacter pylori (strain ATCC 700392 / 26695)</name>
    <name type="common">Campylobacter pylori</name>
    <dbReference type="NCBI Taxonomy" id="85962"/>
    <lineage>
        <taxon>Bacteria</taxon>
        <taxon>Pseudomonadati</taxon>
        <taxon>Campylobacterota</taxon>
        <taxon>Epsilonproteobacteria</taxon>
        <taxon>Campylobacterales</taxon>
        <taxon>Helicobacteraceae</taxon>
        <taxon>Helicobacter</taxon>
    </lineage>
</organism>
<feature type="chain" id="PRO_0000144444" description="ATP synthase subunit beta">
    <location>
        <begin position="1"/>
        <end position="469"/>
    </location>
</feature>
<feature type="binding site" evidence="1">
    <location>
        <begin position="155"/>
        <end position="162"/>
    </location>
    <ligand>
        <name>ATP</name>
        <dbReference type="ChEBI" id="CHEBI:30616"/>
    </ligand>
</feature>
<feature type="sequence variant" description="In strain: CCUG 17874 / NCTC 11638.">
    <original>VI</original>
    <variation>AV</variation>
    <location>
        <begin position="73"/>
        <end position="74"/>
    </location>
</feature>
<feature type="sequence variant" description="In strain: CCUG 17874 / NCTC 11638.">
    <original>V</original>
    <variation>I</variation>
    <location>
        <position position="363"/>
    </location>
</feature>
<reference key="1">
    <citation type="journal article" date="1997" name="Infect. Immun.">
        <title>Analysis of F1F0-ATPase from Helicobacter pylori.</title>
        <authorList>
            <person name="McGowan C.C."/>
            <person name="Cover T.L."/>
            <person name="Blaser M.J."/>
        </authorList>
    </citation>
    <scope>NUCLEOTIDE SEQUENCE [GENOMIC DNA]</scope>
    <source>
        <strain>DSM 4867 / CCUG 17874 / NCTC 11638</strain>
    </source>
</reference>
<reference key="2">
    <citation type="journal article" date="1997" name="Nature">
        <title>The complete genome sequence of the gastric pathogen Helicobacter pylori.</title>
        <authorList>
            <person name="Tomb J.-F."/>
            <person name="White O."/>
            <person name="Kerlavage A.R."/>
            <person name="Clayton R.A."/>
            <person name="Sutton G.G."/>
            <person name="Fleischmann R.D."/>
            <person name="Ketchum K.A."/>
            <person name="Klenk H.-P."/>
            <person name="Gill S.R."/>
            <person name="Dougherty B.A."/>
            <person name="Nelson K.E."/>
            <person name="Quackenbush J."/>
            <person name="Zhou L."/>
            <person name="Kirkness E.F."/>
            <person name="Peterson S.N."/>
            <person name="Loftus B.J."/>
            <person name="Richardson D.L."/>
            <person name="Dodson R.J."/>
            <person name="Khalak H.G."/>
            <person name="Glodek A."/>
            <person name="McKenney K."/>
            <person name="FitzGerald L.M."/>
            <person name="Lee N."/>
            <person name="Adams M.D."/>
            <person name="Hickey E.K."/>
            <person name="Berg D.E."/>
            <person name="Gocayne J.D."/>
            <person name="Utterback T.R."/>
            <person name="Peterson J.D."/>
            <person name="Kelley J.M."/>
            <person name="Cotton M.D."/>
            <person name="Weidman J.F."/>
            <person name="Fujii C."/>
            <person name="Bowman C."/>
            <person name="Watthey L."/>
            <person name="Wallin E."/>
            <person name="Hayes W.S."/>
            <person name="Borodovsky M."/>
            <person name="Karp P.D."/>
            <person name="Smith H.O."/>
            <person name="Fraser C.M."/>
            <person name="Venter J.C."/>
        </authorList>
    </citation>
    <scope>NUCLEOTIDE SEQUENCE [LARGE SCALE GENOMIC DNA]</scope>
    <source>
        <strain>ATCC 700392 / 26695</strain>
    </source>
</reference>
<gene>
    <name evidence="1" type="primary">atpD</name>
    <name type="ordered locus">HP_1132</name>
</gene>
<sequence>MKAMEGKIIQVLGPVVDVEFESYLPAIFEALDINFEVNGVQKSLVLEVAAHLGGNRVRAIAMDMTEGLVRNQVIKARGKMIEVPVGEEVLGRIFNVVGESIDNLEPLKPSLTWPIHRKAPSFEQQSTKTEMFETGIKVIDLLAPYSKGGKVGLFGGAGVGKTVIIMELIHNVAYKHNGYSVFAGVGERTREGNDLYFEMKEGGVLDKVALCYGQMNEPPGARNRIAFTGLTMAEYFRDEKGLDVLMFIDNIFRYAQSGAEMSALLGRIPSAVGYQPTLAGEMGKLQERIASTKNGSITSVQAVYVPADDLTDPAPASVFAHLDATTVLNRKIAEKGIYPAVDPLDSTSRILSPQMIGEKHYEVATGIQQVLQKYKDLQDIIAILGLDELSEEDKKTVERARKIEKFLSQPFFVAEVFTGSPGKYVTLQETLEGFGGILEGKYDHIPENAFYMVGSIQEVLEKAKNMKNS</sequence>
<evidence type="ECO:0000255" key="1">
    <source>
        <dbReference type="HAMAP-Rule" id="MF_01347"/>
    </source>
</evidence>
<proteinExistence type="inferred from homology"/>
<comment type="function">
    <text evidence="1">Produces ATP from ADP in the presence of a proton gradient across the membrane. The catalytic sites are hosted primarily by the beta subunits.</text>
</comment>
<comment type="catalytic activity">
    <reaction evidence="1">
        <text>ATP + H2O + 4 H(+)(in) = ADP + phosphate + 5 H(+)(out)</text>
        <dbReference type="Rhea" id="RHEA:57720"/>
        <dbReference type="ChEBI" id="CHEBI:15377"/>
        <dbReference type="ChEBI" id="CHEBI:15378"/>
        <dbReference type="ChEBI" id="CHEBI:30616"/>
        <dbReference type="ChEBI" id="CHEBI:43474"/>
        <dbReference type="ChEBI" id="CHEBI:456216"/>
        <dbReference type="EC" id="7.1.2.2"/>
    </reaction>
</comment>
<comment type="subunit">
    <text evidence="1">F-type ATPases have 2 components, CF(1) - the catalytic core - and CF(0) - the membrane proton channel. CF(1) has five subunits: alpha(3), beta(3), gamma(1), delta(1), epsilon(1). CF(0) has three main subunits: a(1), b(2) and c(9-12). The alpha and beta chains form an alternating ring which encloses part of the gamma chain. CF(1) is attached to CF(0) by a central stalk formed by the gamma and epsilon chains, while a peripheral stalk is formed by the delta and b chains.</text>
</comment>
<comment type="subcellular location">
    <subcellularLocation>
        <location evidence="1">Cell inner membrane</location>
        <topology evidence="1">Peripheral membrane protein</topology>
    </subcellularLocation>
</comment>
<comment type="similarity">
    <text evidence="1">Belongs to the ATPase alpha/beta chains family.</text>
</comment>